<proteinExistence type="inferred from homology"/>
<name>ACCA_GRATL</name>
<accession>Q6B8M3</accession>
<evidence type="ECO:0000250" key="1"/>
<evidence type="ECO:0000255" key="2">
    <source>
        <dbReference type="HAMAP-Rule" id="MF_00823"/>
    </source>
</evidence>
<evidence type="ECO:0000255" key="3">
    <source>
        <dbReference type="PROSITE-ProRule" id="PRU01137"/>
    </source>
</evidence>
<feature type="chain" id="PRO_0000223864" description="Acetyl-coenzyme A carboxylase carboxyl transferase subunit alpha">
    <location>
        <begin position="1"/>
        <end position="328"/>
    </location>
</feature>
<feature type="domain" description="CoA carboxyltransferase C-terminal" evidence="3">
    <location>
        <begin position="42"/>
        <end position="296"/>
    </location>
</feature>
<geneLocation type="chloroplast"/>
<organism>
    <name type="scientific">Gracilaria tenuistipitata var. liui</name>
    <name type="common">Red alga</name>
    <dbReference type="NCBI Taxonomy" id="285951"/>
    <lineage>
        <taxon>Eukaryota</taxon>
        <taxon>Rhodophyta</taxon>
        <taxon>Florideophyceae</taxon>
        <taxon>Rhodymeniophycidae</taxon>
        <taxon>Gracilariales</taxon>
        <taxon>Gracilariaceae</taxon>
        <taxon>Gracilaria</taxon>
        <taxon>Gracilaria tenuistipitata</taxon>
    </lineage>
</organism>
<gene>
    <name evidence="2" type="primary">accA</name>
    <name type="ordered locus">Grc000181</name>
</gene>
<protein>
    <recommendedName>
        <fullName evidence="2">Acetyl-coenzyme A carboxylase carboxyl transferase subunit alpha</fullName>
        <shortName evidence="2">ACCase subunit alpha</shortName>
        <shortName evidence="2">Acetyl-CoA carboxylase carboxyltransferase subunit alpha</shortName>
        <ecNumber evidence="2">2.1.3.15</ecNumber>
    </recommendedName>
</protein>
<dbReference type="EC" id="2.1.3.15" evidence="2"/>
<dbReference type="EMBL" id="AY673996">
    <property type="protein sequence ID" value="AAT79762.1"/>
    <property type="molecule type" value="Genomic_DNA"/>
</dbReference>
<dbReference type="RefSeq" id="YP_063687.1">
    <property type="nucleotide sequence ID" value="NC_006137.1"/>
</dbReference>
<dbReference type="SMR" id="Q6B8M3"/>
<dbReference type="GeneID" id="2944135"/>
<dbReference type="UniPathway" id="UPA00655">
    <property type="reaction ID" value="UER00711"/>
</dbReference>
<dbReference type="GO" id="GO:0009317">
    <property type="term" value="C:acetyl-CoA carboxylase complex"/>
    <property type="evidence" value="ECO:0007669"/>
    <property type="project" value="InterPro"/>
</dbReference>
<dbReference type="GO" id="GO:0009507">
    <property type="term" value="C:chloroplast"/>
    <property type="evidence" value="ECO:0007669"/>
    <property type="project" value="UniProtKB-SubCell"/>
</dbReference>
<dbReference type="GO" id="GO:0003989">
    <property type="term" value="F:acetyl-CoA carboxylase activity"/>
    <property type="evidence" value="ECO:0007669"/>
    <property type="project" value="InterPro"/>
</dbReference>
<dbReference type="GO" id="GO:0005524">
    <property type="term" value="F:ATP binding"/>
    <property type="evidence" value="ECO:0007669"/>
    <property type="project" value="UniProtKB-KW"/>
</dbReference>
<dbReference type="GO" id="GO:0016743">
    <property type="term" value="F:carboxyl- or carbamoyltransferase activity"/>
    <property type="evidence" value="ECO:0007669"/>
    <property type="project" value="UniProtKB-UniRule"/>
</dbReference>
<dbReference type="GO" id="GO:0006633">
    <property type="term" value="P:fatty acid biosynthetic process"/>
    <property type="evidence" value="ECO:0007669"/>
    <property type="project" value="UniProtKB-KW"/>
</dbReference>
<dbReference type="GO" id="GO:2001295">
    <property type="term" value="P:malonyl-CoA biosynthetic process"/>
    <property type="evidence" value="ECO:0007669"/>
    <property type="project" value="UniProtKB-UniRule"/>
</dbReference>
<dbReference type="Gene3D" id="3.90.226.10">
    <property type="entry name" value="2-enoyl-CoA Hydratase, Chain A, domain 1"/>
    <property type="match status" value="1"/>
</dbReference>
<dbReference type="HAMAP" id="MF_00823">
    <property type="entry name" value="AcetylCoA_CT_alpha"/>
    <property type="match status" value="1"/>
</dbReference>
<dbReference type="InterPro" id="IPR001095">
    <property type="entry name" value="Acetyl_CoA_COase_a_su"/>
</dbReference>
<dbReference type="InterPro" id="IPR029045">
    <property type="entry name" value="ClpP/crotonase-like_dom_sf"/>
</dbReference>
<dbReference type="InterPro" id="IPR011763">
    <property type="entry name" value="COA_CT_C"/>
</dbReference>
<dbReference type="NCBIfam" id="TIGR00513">
    <property type="entry name" value="accA"/>
    <property type="match status" value="1"/>
</dbReference>
<dbReference type="NCBIfam" id="NF041504">
    <property type="entry name" value="AccA_sub"/>
    <property type="match status" value="1"/>
</dbReference>
<dbReference type="NCBIfam" id="NF004344">
    <property type="entry name" value="PRK05724.1"/>
    <property type="match status" value="1"/>
</dbReference>
<dbReference type="PANTHER" id="PTHR42853">
    <property type="entry name" value="ACETYL-COENZYME A CARBOXYLASE CARBOXYL TRANSFERASE SUBUNIT ALPHA"/>
    <property type="match status" value="1"/>
</dbReference>
<dbReference type="PANTHER" id="PTHR42853:SF3">
    <property type="entry name" value="ACETYL-COENZYME A CARBOXYLASE CARBOXYL TRANSFERASE SUBUNIT ALPHA, CHLOROPLASTIC"/>
    <property type="match status" value="1"/>
</dbReference>
<dbReference type="Pfam" id="PF03255">
    <property type="entry name" value="ACCA"/>
    <property type="match status" value="1"/>
</dbReference>
<dbReference type="PRINTS" id="PR01069">
    <property type="entry name" value="ACCCTRFRASEA"/>
</dbReference>
<dbReference type="SUPFAM" id="SSF52096">
    <property type="entry name" value="ClpP/crotonase"/>
    <property type="match status" value="1"/>
</dbReference>
<dbReference type="PROSITE" id="PS50989">
    <property type="entry name" value="COA_CT_CTER"/>
    <property type="match status" value="1"/>
</dbReference>
<keyword id="KW-0067">ATP-binding</keyword>
<keyword id="KW-0150">Chloroplast</keyword>
<keyword id="KW-0275">Fatty acid biosynthesis</keyword>
<keyword id="KW-0276">Fatty acid metabolism</keyword>
<keyword id="KW-0444">Lipid biosynthesis</keyword>
<keyword id="KW-0443">Lipid metabolism</keyword>
<keyword id="KW-0547">Nucleotide-binding</keyword>
<keyword id="KW-0934">Plastid</keyword>
<keyword id="KW-0808">Transferase</keyword>
<sequence>MTIRKALSLDFLKPILELEYQIQQLSKISTYQQVVLDQELVSFKEQLSILKYEVFQSLTPLQRLHLVRQADRPTTLDYIPYIMSEWLELHGDRGGKDDPALVGGIGKLNNYTVIFVGHQRGKDTKDNVLRNFGMASPGGYRKALRLMQHANQFNFPILTFIDTPGAWAGIDAETLGQGEAIAVNLREMFSFDVPIICTILGEGGSGGALGIGIGDKILMLEYAVYTVATPEACAAILWKDSKRSLDAAEALKITSADLKVLGVIDKVVKEPIGGSQSNPSQAAYILKESLISELHFLTQLLPSKRKNLRYSKFRKIGTFYEGSEDYFG</sequence>
<reference key="1">
    <citation type="journal article" date="2004" name="J. Mol. Evol.">
        <title>Comparative analysis of the complete plastid genome sequence of the red alga Gracilaria tenuistipitata var. liui provides insights into the evolution of rhodoplasts and their relationship to other plastids.</title>
        <authorList>
            <person name="Hagopian J.C."/>
            <person name="Reis M."/>
            <person name="Kitajima J.P."/>
            <person name="Bhattacharya D."/>
            <person name="de Oliveira M.C."/>
        </authorList>
    </citation>
    <scope>NUCLEOTIDE SEQUENCE [LARGE SCALE GENOMIC DNA]</scope>
</reference>
<comment type="function">
    <text evidence="2">Component of the acetyl coenzyme A carboxylase (ACC) complex. First, biotin carboxylase catalyzes the carboxylation of biotin on its carrier protein (BCCP) and then the CO(2) group is transferred by the carboxyltransferase to acetyl-CoA to form malonyl-CoA.</text>
</comment>
<comment type="catalytic activity">
    <reaction evidence="2">
        <text>N(6)-carboxybiotinyl-L-lysyl-[protein] + acetyl-CoA = N(6)-biotinyl-L-lysyl-[protein] + malonyl-CoA</text>
        <dbReference type="Rhea" id="RHEA:54728"/>
        <dbReference type="Rhea" id="RHEA-COMP:10505"/>
        <dbReference type="Rhea" id="RHEA-COMP:10506"/>
        <dbReference type="ChEBI" id="CHEBI:57288"/>
        <dbReference type="ChEBI" id="CHEBI:57384"/>
        <dbReference type="ChEBI" id="CHEBI:83144"/>
        <dbReference type="ChEBI" id="CHEBI:83145"/>
        <dbReference type="EC" id="2.1.3.15"/>
    </reaction>
</comment>
<comment type="pathway">
    <text evidence="2">Lipid metabolism; malonyl-CoA biosynthesis; malonyl-CoA from acetyl-CoA: step 1/1.</text>
</comment>
<comment type="subunit">
    <text evidence="1">Acetyl-CoA carboxylase is a heterohexamer composed of biotin carboxyl carrier protein (accB), biotin carboxylase (accC) and two subunits each of ACCase subunit alpha (accA) and ACCase subunit beta (accD).</text>
</comment>
<comment type="subcellular location">
    <subcellularLocation>
        <location>Plastid</location>
        <location>Chloroplast</location>
    </subcellularLocation>
</comment>
<comment type="similarity">
    <text evidence="2">Belongs to the AccA family.</text>
</comment>